<protein>
    <recommendedName>
        <fullName>Glycine betaine/proline betaine-binding periplasmic protein</fullName>
    </recommendedName>
    <alternativeName>
        <fullName>GBBP</fullName>
    </alternativeName>
</protein>
<name>PROX_SALTY</name>
<evidence type="ECO:0000250" key="1">
    <source>
        <dbReference type="UniProtKB" id="P0AFM2"/>
    </source>
</evidence>
<evidence type="ECO:0000255" key="2"/>
<evidence type="ECO:0000305" key="3">
    <source>
    </source>
</evidence>
<comment type="function">
    <text evidence="1">Part of the ProU ABC transporter complex involved in glycine betaine and proline betaine uptake. Binds glycine betaine and proline betaine with high affinity.</text>
</comment>
<comment type="subunit">
    <text evidence="1">The complex is composed of two ATP-binding proteins (ProV), two transmembrane proteins (ProW) and a solute-binding protein (ProX).</text>
</comment>
<comment type="subcellular location">
    <subcellularLocation>
        <location evidence="1">Periplasm</location>
    </subcellularLocation>
</comment>
<comment type="induction">
    <text evidence="3">Induced in response to increased extracellular osmolarity, this is the third gene of the proU operon (proV-proW-proX). Osmoregulation requires curved DNA downstream of the transcription start site in proV, which is repressed when bound by H-NS. H-NS may act indirectly to influence the local topology of the promoter (PubMed:1423593).</text>
</comment>
<proteinExistence type="evidence at transcript level"/>
<keyword id="KW-0029">Amino-acid transport</keyword>
<keyword id="KW-1015">Disulfide bond</keyword>
<keyword id="KW-0574">Periplasm</keyword>
<keyword id="KW-1185">Reference proteome</keyword>
<keyword id="KW-0732">Signal</keyword>
<keyword id="KW-0813">Transport</keyword>
<feature type="signal peptide" evidence="2">
    <location>
        <begin position="1"/>
        <end position="21"/>
    </location>
</feature>
<feature type="chain" id="PRO_5004318332" description="Glycine betaine/proline betaine-binding periplasmic protein">
    <location>
        <begin position="22"/>
        <end position="331"/>
    </location>
</feature>
<feature type="binding site" evidence="1">
    <location>
        <position position="86"/>
    </location>
    <ligand>
        <name>substrate</name>
    </ligand>
</feature>
<feature type="binding site" evidence="1">
    <location>
        <position position="90"/>
    </location>
    <ligand>
        <name>substrate</name>
    </ligand>
</feature>
<feature type="binding site" evidence="1">
    <location>
        <begin position="161"/>
        <end position="163"/>
    </location>
    <ligand>
        <name>substrate</name>
    </ligand>
</feature>
<feature type="disulfide bond" evidence="1">
    <location>
        <begin position="157"/>
        <end position="163"/>
    </location>
</feature>
<gene>
    <name type="primary">proX</name>
    <name type="ordered locus">STM2811</name>
</gene>
<sequence length="331" mass="36153">MRHTVIFASAFATLVTASAFAADLPGKGITVQPIQSTISEETFQTLLVSRALEKLGYTVNKPSEVDYNVGYTSIASGDATFTAVNWQPLHDDMYAAAGGDNKFYREGVFVSGAAQGYLIDKKTAEQYNITNIAQLKDPKIAKIFDTNGDGKADMMGCSPGWGCEAVINHQNKAFDLQKTVEVSHGNYAAMMADTITRFKEGKPVLYYTWTPYWVSDVMKPGKDVVWLQVPFSSLPGEQKNIDTKLPNGANYGFPVNTMHIVANKAWAEKNPAAAKLFAIMKLPLADINAQNAMMHAGKSSEADVQGHVDGWINAHQQQFDGWVKEALAAQK</sequence>
<organism>
    <name type="scientific">Salmonella typhimurium (strain LT2 / SGSC1412 / ATCC 700720)</name>
    <dbReference type="NCBI Taxonomy" id="99287"/>
    <lineage>
        <taxon>Bacteria</taxon>
        <taxon>Pseudomonadati</taxon>
        <taxon>Pseudomonadota</taxon>
        <taxon>Gammaproteobacteria</taxon>
        <taxon>Enterobacterales</taxon>
        <taxon>Enterobacteriaceae</taxon>
        <taxon>Salmonella</taxon>
    </lineage>
</organism>
<reference key="1">
    <citation type="journal article" date="2001" name="Nature">
        <title>Complete genome sequence of Salmonella enterica serovar Typhimurium LT2.</title>
        <authorList>
            <person name="McClelland M."/>
            <person name="Sanderson K.E."/>
            <person name="Spieth J."/>
            <person name="Clifton S.W."/>
            <person name="Latreille P."/>
            <person name="Courtney L."/>
            <person name="Porwollik S."/>
            <person name="Ali J."/>
            <person name="Dante M."/>
            <person name="Du F."/>
            <person name="Hou S."/>
            <person name="Layman D."/>
            <person name="Leonard S."/>
            <person name="Nguyen C."/>
            <person name="Scott K."/>
            <person name="Holmes A."/>
            <person name="Grewal N."/>
            <person name="Mulvaney E."/>
            <person name="Ryan E."/>
            <person name="Sun H."/>
            <person name="Florea L."/>
            <person name="Miller W."/>
            <person name="Stoneking T."/>
            <person name="Nhan M."/>
            <person name="Waterston R."/>
            <person name="Wilson R.K."/>
        </authorList>
    </citation>
    <scope>NUCLEOTIDE SEQUENCE [LARGE SCALE GENOMIC DNA]</scope>
    <source>
        <strain>LT2 / SGSC1412 / ATCC 700720</strain>
    </source>
</reference>
<reference key="2">
    <citation type="journal article" date="1992" name="Cell">
        <title>The chromatin-associated protein H-NS interacts with curved DNA to influence DNA topology and gene expression.</title>
        <authorList>
            <person name="Owen-Hughes T.A."/>
            <person name="Pavitt G.D."/>
            <person name="Santos D.S."/>
            <person name="Sidebotham J.M."/>
            <person name="Hulton C.S."/>
            <person name="Hinton J.C."/>
            <person name="Higgins C.F."/>
        </authorList>
    </citation>
    <scope>INDUCTION</scope>
    <source>
        <strain>LT2 / SGSC1412 / ATCC 700720</strain>
    </source>
</reference>
<dbReference type="EMBL" id="AE006468">
    <property type="protein sequence ID" value="AAL21696.1"/>
    <property type="molecule type" value="Genomic_DNA"/>
</dbReference>
<dbReference type="RefSeq" id="NP_461737.1">
    <property type="nucleotide sequence ID" value="NC_003197.2"/>
</dbReference>
<dbReference type="RefSeq" id="WP_001216622.1">
    <property type="nucleotide sequence ID" value="NC_003197.2"/>
</dbReference>
<dbReference type="SMR" id="Q8ZML1"/>
<dbReference type="STRING" id="99287.STM2811"/>
<dbReference type="PaxDb" id="99287-STM2811"/>
<dbReference type="GeneID" id="1254334"/>
<dbReference type="KEGG" id="stm:STM2811"/>
<dbReference type="PATRIC" id="fig|99287.12.peg.2969"/>
<dbReference type="HOGENOM" id="CLU_070055_0_0_6"/>
<dbReference type="OMA" id="EHNQGNY"/>
<dbReference type="PhylomeDB" id="Q8ZML1"/>
<dbReference type="BioCyc" id="SENT99287:STM2811-MONOMER"/>
<dbReference type="Proteomes" id="UP000001014">
    <property type="component" value="Chromosome"/>
</dbReference>
<dbReference type="GO" id="GO:0043190">
    <property type="term" value="C:ATP-binding cassette (ABC) transporter complex"/>
    <property type="evidence" value="ECO:0007669"/>
    <property type="project" value="InterPro"/>
</dbReference>
<dbReference type="GO" id="GO:0042597">
    <property type="term" value="C:periplasmic space"/>
    <property type="evidence" value="ECO:0007669"/>
    <property type="project" value="UniProtKB-SubCell"/>
</dbReference>
<dbReference type="GO" id="GO:0022857">
    <property type="term" value="F:transmembrane transporter activity"/>
    <property type="evidence" value="ECO:0007669"/>
    <property type="project" value="InterPro"/>
</dbReference>
<dbReference type="GO" id="GO:0006865">
    <property type="term" value="P:amino acid transport"/>
    <property type="evidence" value="ECO:0007669"/>
    <property type="project" value="UniProtKB-KW"/>
</dbReference>
<dbReference type="CDD" id="cd13638">
    <property type="entry name" value="PBP2_EcProx_like"/>
    <property type="match status" value="1"/>
</dbReference>
<dbReference type="Gene3D" id="3.40.190.100">
    <property type="entry name" value="Glycine betaine-binding periplasmic protein, domain 2"/>
    <property type="match status" value="1"/>
</dbReference>
<dbReference type="Gene3D" id="3.40.190.10">
    <property type="entry name" value="Periplasmic binding protein-like II"/>
    <property type="match status" value="1"/>
</dbReference>
<dbReference type="InterPro" id="IPR007210">
    <property type="entry name" value="ABC_Gly_betaine_transp_sub-bd"/>
</dbReference>
<dbReference type="NCBIfam" id="NF008334">
    <property type="entry name" value="PRK11119.1"/>
    <property type="match status" value="1"/>
</dbReference>
<dbReference type="Pfam" id="PF04069">
    <property type="entry name" value="OpuAC"/>
    <property type="match status" value="1"/>
</dbReference>
<dbReference type="SUPFAM" id="SSF53850">
    <property type="entry name" value="Periplasmic binding protein-like II"/>
    <property type="match status" value="1"/>
</dbReference>
<accession>Q8ZML1</accession>